<organismHost>
    <name type="scientific">Bos taurus</name>
    <name type="common">Bovine</name>
    <dbReference type="NCBI Taxonomy" id="9913"/>
</organismHost>
<accession>P01136</accession>
<accession>Q76ZJ8</accession>
<sequence length="140" mass="15524">MSMKYLMLLFAAMIIRSFADSGNAIETTSPEITNATTDIPAIRLCGPEGDGYCLHGDCIHARDIDGMYCRCSHGYTGIRCQHVVLVDYQRSENPNTTTSYIPSPGIMLVLVGIIIITCCLLSVYRFTRRTKLPIQDMVVP</sequence>
<name>VGF_VACCW</name>
<gene>
    <name type="primary">OPG019</name>
    <name type="synonym">VGF-1</name>
    <name type="ordered locus">VACWR009</name>
</gene>
<gene>
    <name type="primary">VGF-2</name>
    <name type="ordered locus">VACWR210</name>
</gene>
<organism>
    <name type="scientific">Vaccinia virus (strain Western Reserve)</name>
    <name type="common">VACV</name>
    <name type="synonym">Vaccinia virus (strain WR)</name>
    <dbReference type="NCBI Taxonomy" id="10254"/>
    <lineage>
        <taxon>Viruses</taxon>
        <taxon>Varidnaviria</taxon>
        <taxon>Bamfordvirae</taxon>
        <taxon>Nucleocytoviricota</taxon>
        <taxon>Pokkesviricetes</taxon>
        <taxon>Chitovirales</taxon>
        <taxon>Poxviridae</taxon>
        <taxon>Chordopoxvirinae</taxon>
        <taxon>Orthopoxvirus</taxon>
        <taxon>Vaccinia virus</taxon>
    </lineage>
</organism>
<keyword id="KW-1015">Disulfide bond</keyword>
<keyword id="KW-0244">Early protein</keyword>
<keyword id="KW-0245">EGF-like domain</keyword>
<keyword id="KW-0325">Glycoprotein</keyword>
<keyword id="KW-0339">Growth factor</keyword>
<keyword id="KW-1043">Host membrane</keyword>
<keyword id="KW-0945">Host-virus interaction</keyword>
<keyword id="KW-0472">Membrane</keyword>
<keyword id="KW-1185">Reference proteome</keyword>
<keyword id="KW-0964">Secreted</keyword>
<keyword id="KW-0732">Signal</keyword>
<keyword id="KW-0812">Transmembrane</keyword>
<keyword id="KW-1133">Transmembrane helix</keyword>
<proteinExistence type="evidence at protein level"/>
<evidence type="ECO:0000255" key="1"/>
<evidence type="ECO:0000255" key="2">
    <source>
        <dbReference type="PROSITE-ProRule" id="PRU00076"/>
    </source>
</evidence>
<evidence type="ECO:0000269" key="3">
    <source>
    </source>
</evidence>
<evidence type="ECO:0000269" key="4">
    <source>
    </source>
</evidence>
<evidence type="ECO:0000269" key="5">
    <source>
    </source>
</evidence>
<evidence type="ECO:0000269" key="6">
    <source>
    </source>
</evidence>
<evidence type="ECO:0000269" key="7">
    <source>
    </source>
</evidence>
<evidence type="ECO:0000269" key="8">
    <source>
    </source>
</evidence>
<evidence type="ECO:0000269" key="9">
    <source>
    </source>
</evidence>
<evidence type="ECO:0000269" key="10">
    <source>
    </source>
</evidence>
<evidence type="ECO:0000269" key="11">
    <source>
    </source>
</evidence>
<evidence type="ECO:0000305" key="12"/>
<protein>
    <recommendedName>
        <fullName>Pro-Viral epidermal growth factor</fullName>
        <shortName>Pro-VGF</shortName>
    </recommendedName>
    <component>
        <recommendedName>
            <fullName>Viral epidermal growth factor</fullName>
            <shortName>VGF</shortName>
        </recommendedName>
        <alternativeName>
            <fullName>Secreted epidermal growth factor-like</fullName>
        </alternativeName>
    </component>
</protein>
<dbReference type="EMBL" id="J02421">
    <property type="status" value="NOT_ANNOTATED_CDS"/>
    <property type="molecule type" value="Genomic_DNA"/>
</dbReference>
<dbReference type="EMBL" id="AY243312">
    <property type="protein sequence ID" value="AAO89288.1"/>
    <property type="molecule type" value="Genomic_DNA"/>
</dbReference>
<dbReference type="EMBL" id="AY243312">
    <property type="protein sequence ID" value="AAO89489.1"/>
    <property type="molecule type" value="Genomic_DNA"/>
</dbReference>
<dbReference type="PIR" id="A01391">
    <property type="entry name" value="WMVZ9"/>
</dbReference>
<dbReference type="RefSeq" id="YP_233092.1">
    <property type="nucleotide sequence ID" value="NC_006998.1"/>
</dbReference>
<dbReference type="SMR" id="P01136"/>
<dbReference type="GlyCosmos" id="P01136">
    <property type="glycosylation" value="2 sites, No reported glycans"/>
</dbReference>
<dbReference type="DNASU" id="3707587"/>
<dbReference type="DNASU" id="3707624"/>
<dbReference type="GeneID" id="3707587"/>
<dbReference type="KEGG" id="vg:3707587"/>
<dbReference type="KEGG" id="vg:3707624"/>
<dbReference type="Proteomes" id="UP000000344">
    <property type="component" value="Genome"/>
</dbReference>
<dbReference type="GO" id="GO:0005615">
    <property type="term" value="C:extracellular space"/>
    <property type="evidence" value="ECO:0007669"/>
    <property type="project" value="TreeGrafter"/>
</dbReference>
<dbReference type="GO" id="GO:0033644">
    <property type="term" value="C:host cell membrane"/>
    <property type="evidence" value="ECO:0007669"/>
    <property type="project" value="UniProtKB-SubCell"/>
</dbReference>
<dbReference type="GO" id="GO:0016020">
    <property type="term" value="C:membrane"/>
    <property type="evidence" value="ECO:0007669"/>
    <property type="project" value="UniProtKB-KW"/>
</dbReference>
<dbReference type="GO" id="GO:0005154">
    <property type="term" value="F:epidermal growth factor receptor binding"/>
    <property type="evidence" value="ECO:0007669"/>
    <property type="project" value="InterPro"/>
</dbReference>
<dbReference type="GO" id="GO:0008083">
    <property type="term" value="F:growth factor activity"/>
    <property type="evidence" value="ECO:0007669"/>
    <property type="project" value="UniProtKB-KW"/>
</dbReference>
<dbReference type="GO" id="GO:0007173">
    <property type="term" value="P:epidermal growth factor receptor signaling pathway"/>
    <property type="evidence" value="ECO:0007669"/>
    <property type="project" value="TreeGrafter"/>
</dbReference>
<dbReference type="GO" id="GO:0008284">
    <property type="term" value="P:positive regulation of cell population proliferation"/>
    <property type="evidence" value="ECO:0007669"/>
    <property type="project" value="TreeGrafter"/>
</dbReference>
<dbReference type="GO" id="GO:0045840">
    <property type="term" value="P:positive regulation of mitotic nuclear division"/>
    <property type="evidence" value="ECO:0007669"/>
    <property type="project" value="TreeGrafter"/>
</dbReference>
<dbReference type="Gene3D" id="2.10.25.10">
    <property type="entry name" value="Laminin"/>
    <property type="match status" value="1"/>
</dbReference>
<dbReference type="InterPro" id="IPR000742">
    <property type="entry name" value="EGF-like_dom"/>
</dbReference>
<dbReference type="InterPro" id="IPR011170">
    <property type="entry name" value="GF_C11R"/>
</dbReference>
<dbReference type="PANTHER" id="PTHR10740:SF11">
    <property type="entry name" value="PROEPIREGULIN"/>
    <property type="match status" value="1"/>
</dbReference>
<dbReference type="PANTHER" id="PTHR10740">
    <property type="entry name" value="TRANSFORMING GROWTH FACTOR ALPHA"/>
    <property type="match status" value="1"/>
</dbReference>
<dbReference type="PIRSF" id="PIRSF001779">
    <property type="entry name" value="GF_C11R"/>
    <property type="match status" value="1"/>
</dbReference>
<dbReference type="PRINTS" id="PR00009">
    <property type="entry name" value="EGFTGF"/>
</dbReference>
<dbReference type="SUPFAM" id="SSF57196">
    <property type="entry name" value="EGF/Laminin"/>
    <property type="match status" value="1"/>
</dbReference>
<dbReference type="PROSITE" id="PS00022">
    <property type="entry name" value="EGF_1"/>
    <property type="match status" value="1"/>
</dbReference>
<dbReference type="PROSITE" id="PS01186">
    <property type="entry name" value="EGF_2"/>
    <property type="match status" value="1"/>
</dbReference>
<dbReference type="PROSITE" id="PS50026">
    <property type="entry name" value="EGF_3"/>
    <property type="match status" value="1"/>
</dbReference>
<reference key="1">
    <citation type="journal article" date="1982" name="J. Virol.">
        <title>Complete nucleotide sequences of two adjacent early vaccinia virus genes located within the inverted terminal repetition.</title>
        <authorList>
            <person name="Venkatesan S."/>
            <person name="Gershowitz A."/>
            <person name="Moss B."/>
        </authorList>
    </citation>
    <scope>NUCLEOTIDE SEQUENCE [GENOMIC DNA]</scope>
</reference>
<reference key="2">
    <citation type="submission" date="2003-02" db="EMBL/GenBank/DDBJ databases">
        <title>Sequencing of the coding region of Vaccinia-WR to an average 9-fold redundancy and an error rate of 0.16/10kb.</title>
        <authorList>
            <person name="Esposito J.J."/>
            <person name="Frace A.M."/>
            <person name="Sammons S.A."/>
            <person name="Olsen-Rasmussen M."/>
            <person name="Osborne J."/>
            <person name="Wohlhueter R."/>
        </authorList>
    </citation>
    <scope>NUCLEOTIDE SEQUENCE [LARGE SCALE GENOMIC DNA]</scope>
</reference>
<reference key="3">
    <citation type="journal article" date="1985" name="Cell">
        <title>Purification and characterization of vaccinia virus growth factor.</title>
        <authorList>
            <person name="Stroobant P."/>
            <person name="Rice A.P."/>
            <person name="Gullick W.J."/>
            <person name="Cheng D.J."/>
            <person name="Kerr I.M."/>
            <person name="Waterfield M.D."/>
        </authorList>
    </citation>
    <scope>CHARACTERIZATION</scope>
    <scope>CLEAVAGE</scope>
</reference>
<reference key="4">
    <citation type="journal article" date="1988" name="J. Virol.">
        <title>Deletion of the vaccinia virus growth factor gene reduces virus virulence.</title>
        <authorList>
            <person name="Buller R.M."/>
            <person name="Chakrabarti S."/>
            <person name="Cooper J.A."/>
            <person name="Twardzik D.R."/>
            <person name="Moss B."/>
        </authorList>
    </citation>
    <scope>DISRUPTION PHENOTYPE</scope>
</reference>
<reference key="5">
    <citation type="journal article" date="1989" name="Microb. Pathog.">
        <title>Attenuated deletion mutants of vaccinia virus lacking the vaccinia growth factor are defective in replication in vivo.</title>
        <authorList>
            <person name="Lai A.C."/>
            <person name="Pogo B.G."/>
        </authorList>
    </citation>
    <scope>DISRUPTION PHENOTYPE</scope>
</reference>
<reference key="6">
    <citation type="journal article" date="1988" name="J. Virol.">
        <title>Characterization of vaccinia virus growth factor biosynthetic pathway with an antipeptide antiserum.</title>
        <authorList>
            <person name="Chang W."/>
            <person name="Lim J.G."/>
            <person name="Hellstrom I."/>
            <person name="Gentry L.E."/>
        </authorList>
    </citation>
    <scope>FUNCTION</scope>
    <scope>PROTEOLYTIC PROCESSING</scope>
    <scope>SUBCELLULAR LOCATION</scope>
</reference>
<reference key="7">
    <citation type="journal article" date="1990" name="J. Biol. Chem.">
        <title>Growth inhibition by vaccinia virus growth factor.</title>
        <authorList>
            <person name="Lin Y.Z."/>
            <person name="Ke X.H."/>
            <person name="Tam J.P."/>
        </authorList>
    </citation>
    <scope>FUNCTION</scope>
</reference>
<reference key="8">
    <citation type="journal article" date="2004" name="Biochem. J.">
        <title>The vaccinia virus-stimulated mitogen-activated protein kinase (MAPK) pathway is required for virus multiplication.</title>
        <authorList>
            <person name="Andrade A.A."/>
            <person name="Silva P.N."/>
            <person name="Pereira A.C."/>
            <person name="De Sousa L.P."/>
            <person name="Ferreira P.C."/>
            <person name="Gazzinelli R.T."/>
            <person name="Kroon E.G."/>
            <person name="Ropert C."/>
            <person name="Bonjardim C.A."/>
        </authorList>
    </citation>
    <scope>FUNCTION</scope>
</reference>
<reference key="9">
    <citation type="journal article" date="2010" name="Mem. Inst. Oswaldo Cruz">
        <title>Vaccinia virus regulates expression of p21WAF1/Cip1 in A431 cells.</title>
        <authorList>
            <person name="Andrade A.A."/>
            <person name="Brasil B.S."/>
            <person name="Pereira A.C."/>
            <person name="Ferreira P.C."/>
            <person name="Kroon E.G."/>
            <person name="Bonjardim C.A."/>
        </authorList>
    </citation>
    <scope>FUNCTION</scope>
</reference>
<reference key="10">
    <citation type="journal article" date="2015" name="J. Virol.">
        <title>Deciphering poxvirus gene expression by RNA sequencing and ribosome profiling.</title>
        <authorList>
            <person name="Yang Z."/>
            <person name="Cao S."/>
            <person name="Martens C.A."/>
            <person name="Porcella S.F."/>
            <person name="Xie Z."/>
            <person name="Ma M."/>
            <person name="Shen B."/>
            <person name="Moss B."/>
        </authorList>
    </citation>
    <scope>INDUCTION</scope>
</reference>
<reference key="11">
    <citation type="journal article" date="2019" name="Nat. Microbiol.">
        <title>Vaccinia virus hijacks EGFR signalling to enhance virus spread through rapid and directed infected cell motility.</title>
        <authorList>
            <person name="Beerli C."/>
            <person name="Yakimovich A."/>
            <person name="Kilcher S."/>
            <person name="Reynoso G.V."/>
            <person name="Flaeschner G."/>
            <person name="Mueller D.J."/>
            <person name="Hickman H.D."/>
            <person name="Mercer J."/>
        </authorList>
    </citation>
    <scope>FUNCTION</scope>
    <scope>CLEAVAGE BY HOST ADAM10</scope>
</reference>
<feature type="signal peptide" evidence="1">
    <location>
        <begin position="1"/>
        <end position="18"/>
    </location>
</feature>
<feature type="chain" id="PRO_0000007599" description="Pro-Viral epidermal growth factor">
    <location>
        <begin position="19"/>
        <end position="140"/>
    </location>
</feature>
<feature type="chain" id="PRO_0000412918" description="Viral epidermal growth factor" evidence="1">
    <location>
        <begin position="19"/>
        <end position="96"/>
    </location>
</feature>
<feature type="topological domain" description="Extracellular" evidence="1">
    <location>
        <begin position="19"/>
        <end position="100"/>
    </location>
</feature>
<feature type="transmembrane region" description="Helical" evidence="1">
    <location>
        <begin position="101"/>
        <end position="121"/>
    </location>
</feature>
<feature type="topological domain" description="Cytoplasmic" evidence="1">
    <location>
        <begin position="122"/>
        <end position="140"/>
    </location>
</feature>
<feature type="domain" description="EGF-like" evidence="2">
    <location>
        <begin position="41"/>
        <end position="81"/>
    </location>
</feature>
<feature type="site" description="Cleavage (By host ADAM10 protease)" evidence="6 9">
    <location>
        <begin position="96"/>
        <end position="97"/>
    </location>
</feature>
<feature type="glycosylation site" description="N-linked (GlcNAc...) asparagine; by host" evidence="1">
    <location>
        <position position="34"/>
    </location>
</feature>
<feature type="glycosylation site" description="N-linked (GlcNAc...) asparagine; by host" evidence="1">
    <location>
        <position position="95"/>
    </location>
</feature>
<feature type="disulfide bond" evidence="2">
    <location>
        <begin position="45"/>
        <end position="58"/>
    </location>
</feature>
<feature type="disulfide bond" evidence="2">
    <location>
        <begin position="53"/>
        <end position="69"/>
    </location>
</feature>
<feature type="disulfide bond" evidence="2">
    <location>
        <begin position="71"/>
        <end position="80"/>
    </location>
</feature>
<comment type="function">
    <molecule>Viral epidermal growth factor</molecule>
    <text evidence="3 4 5 10">Stimulates cellular proliferation (hyperplasia)and mobility around infected cells to promote rapid and efficient spread of infection. This effect is beneficial for virus replication in vivo, because poxviruses replicate possibly better in proliferating cells than in quiescent cells. Acts by binding host EGFR, inducing its dimerization, autophosphorylation and leading to activation of several cellular pathways regulating cell proliferation or cell survival. The activation by host EGFR of mitogen activated protein kinases (MAPK) and extracellular-signal regulated kinases (ERK) are essential for the positive effect of vaccinia growth factor on poxvirus virulence in vivo.</text>
</comment>
<comment type="subunit">
    <molecule>Viral epidermal growth factor</molecule>
    <text>Viral epidermal growth factor interacts with host EGFR and promotes EGFR dimerization.</text>
</comment>
<comment type="subcellular location">
    <molecule>Pro-Viral epidermal growth factor</molecule>
    <subcellularLocation>
        <location evidence="10">Host membrane</location>
        <topology evidence="10">Single-pass type I membrane protein</topology>
    </subcellularLocation>
</comment>
<comment type="subcellular location">
    <molecule>Viral epidermal growth factor</molecule>
    <subcellularLocation>
        <location evidence="10">Secreted</location>
    </subcellularLocation>
</comment>
<comment type="induction">
    <text evidence="7">Expressed in the early phase of the viral replicative cycle.</text>
</comment>
<comment type="PTM">
    <text evidence="6 9">Cleaved at the cell surface by host ADAM10, thereby releasing the secreted form of VGF.</text>
</comment>
<comment type="disruption phenotype">
    <text evidence="8 11">Higher doses of VGF- virus than WT virus are required for intracranial lethality in mice and for production of skin lesions in rabbits. No effect in cell culture.</text>
</comment>
<comment type="similarity">
    <text evidence="12">Belongs to the orthopoxvirus OPG019 family.</text>
</comment>